<comment type="function">
    <text>Probably required for both normal cellular growth and differentiation. Inactivation of pknA leads to colonies that appear light green and rough in the absence of combined nitrogen.</text>
</comment>
<comment type="catalytic activity">
    <reaction>
        <text>L-seryl-[protein] + ATP = O-phospho-L-seryl-[protein] + ADP + H(+)</text>
        <dbReference type="Rhea" id="RHEA:17989"/>
        <dbReference type="Rhea" id="RHEA-COMP:9863"/>
        <dbReference type="Rhea" id="RHEA-COMP:11604"/>
        <dbReference type="ChEBI" id="CHEBI:15378"/>
        <dbReference type="ChEBI" id="CHEBI:29999"/>
        <dbReference type="ChEBI" id="CHEBI:30616"/>
        <dbReference type="ChEBI" id="CHEBI:83421"/>
        <dbReference type="ChEBI" id="CHEBI:456216"/>
        <dbReference type="EC" id="2.7.11.1"/>
    </reaction>
</comment>
<comment type="catalytic activity">
    <reaction>
        <text>L-threonyl-[protein] + ATP = O-phospho-L-threonyl-[protein] + ADP + H(+)</text>
        <dbReference type="Rhea" id="RHEA:46608"/>
        <dbReference type="Rhea" id="RHEA-COMP:11060"/>
        <dbReference type="Rhea" id="RHEA-COMP:11605"/>
        <dbReference type="ChEBI" id="CHEBI:15378"/>
        <dbReference type="ChEBI" id="CHEBI:30013"/>
        <dbReference type="ChEBI" id="CHEBI:30616"/>
        <dbReference type="ChEBI" id="CHEBI:61977"/>
        <dbReference type="ChEBI" id="CHEBI:456216"/>
        <dbReference type="EC" id="2.7.11.1"/>
    </reaction>
</comment>
<comment type="similarity">
    <text evidence="1">Belongs to the protein kinase superfamily. Ser/Thr protein kinase family.</text>
</comment>
<proteinExistence type="inferred from homology"/>
<organism>
    <name type="scientific">Nostoc sp. (strain PCC 7120 / SAG 25.82 / UTEX 2576)</name>
    <dbReference type="NCBI Taxonomy" id="103690"/>
    <lineage>
        <taxon>Bacteria</taxon>
        <taxon>Bacillati</taxon>
        <taxon>Cyanobacteriota</taxon>
        <taxon>Cyanophyceae</taxon>
        <taxon>Nostocales</taxon>
        <taxon>Nostocaceae</taxon>
        <taxon>Nostoc</taxon>
    </lineage>
</organism>
<feature type="chain" id="PRO_0000171181" description="Serine/threonine-protein kinase PknA">
    <location>
        <begin position="1"/>
        <end position="564"/>
    </location>
</feature>
<feature type="domain" description="Protein kinase" evidence="1">
    <location>
        <begin position="9"/>
        <end position="271"/>
    </location>
</feature>
<feature type="region of interest" description="Disordered" evidence="3">
    <location>
        <begin position="360"/>
        <end position="458"/>
    </location>
</feature>
<feature type="compositionally biased region" description="Polar residues" evidence="3">
    <location>
        <begin position="360"/>
        <end position="406"/>
    </location>
</feature>
<feature type="compositionally biased region" description="Low complexity" evidence="3">
    <location>
        <begin position="428"/>
        <end position="445"/>
    </location>
</feature>
<feature type="active site" description="Proton acceptor" evidence="1 2">
    <location>
        <position position="139"/>
    </location>
</feature>
<feature type="binding site" evidence="1">
    <location>
        <begin position="15"/>
        <end position="23"/>
    </location>
    <ligand>
        <name>ATP</name>
        <dbReference type="ChEBI" id="CHEBI:30616"/>
    </ligand>
</feature>
<feature type="binding site" evidence="1">
    <location>
        <position position="40"/>
    </location>
    <ligand>
        <name>ATP</name>
        <dbReference type="ChEBI" id="CHEBI:30616"/>
    </ligand>
</feature>
<feature type="sequence conflict" description="In Ref. 1; AAB41116." evidence="4" ref="1">
    <original>E</original>
    <variation>Q</variation>
    <location>
        <position position="265"/>
    </location>
</feature>
<feature type="sequence conflict" description="In Ref. 1; AAB41116." evidence="4" ref="1">
    <original>A</original>
    <variation>R</variation>
    <location>
        <position position="522"/>
    </location>
</feature>
<dbReference type="EC" id="2.7.11.1"/>
<dbReference type="EMBL" id="U00484">
    <property type="protein sequence ID" value="AAB41116.1"/>
    <property type="molecule type" value="Genomic_DNA"/>
</dbReference>
<dbReference type="EMBL" id="BA000019">
    <property type="protein sequence ID" value="BAB76065.1"/>
    <property type="molecule type" value="Genomic_DNA"/>
</dbReference>
<dbReference type="PIR" id="AF2351">
    <property type="entry name" value="AF2351"/>
</dbReference>
<dbReference type="RefSeq" id="WP_010998503.1">
    <property type="nucleotide sequence ID" value="NZ_RSCN01000027.1"/>
</dbReference>
<dbReference type="SMR" id="P54734"/>
<dbReference type="STRING" id="103690.gene:10496415"/>
<dbReference type="KEGG" id="ana:alr4366"/>
<dbReference type="eggNOG" id="COG0515">
    <property type="taxonomic scope" value="Bacteria"/>
</dbReference>
<dbReference type="eggNOG" id="COG3266">
    <property type="taxonomic scope" value="Bacteria"/>
</dbReference>
<dbReference type="OrthoDB" id="428678at2"/>
<dbReference type="BRENDA" id="2.7.11.1">
    <property type="organism ID" value="319"/>
</dbReference>
<dbReference type="Proteomes" id="UP000002483">
    <property type="component" value="Chromosome"/>
</dbReference>
<dbReference type="GO" id="GO:0005524">
    <property type="term" value="F:ATP binding"/>
    <property type="evidence" value="ECO:0007669"/>
    <property type="project" value="UniProtKB-KW"/>
</dbReference>
<dbReference type="GO" id="GO:0106310">
    <property type="term" value="F:protein serine kinase activity"/>
    <property type="evidence" value="ECO:0007669"/>
    <property type="project" value="RHEA"/>
</dbReference>
<dbReference type="GO" id="GO:0004674">
    <property type="term" value="F:protein serine/threonine kinase activity"/>
    <property type="evidence" value="ECO:0007669"/>
    <property type="project" value="UniProtKB-KW"/>
</dbReference>
<dbReference type="CDD" id="cd14014">
    <property type="entry name" value="STKc_PknB_like"/>
    <property type="match status" value="1"/>
</dbReference>
<dbReference type="Gene3D" id="3.30.200.20">
    <property type="entry name" value="Phosphorylase Kinase, domain 1"/>
    <property type="match status" value="1"/>
</dbReference>
<dbReference type="Gene3D" id="1.10.510.10">
    <property type="entry name" value="Transferase(Phosphotransferase) domain 1"/>
    <property type="match status" value="1"/>
</dbReference>
<dbReference type="InterPro" id="IPR011009">
    <property type="entry name" value="Kinase-like_dom_sf"/>
</dbReference>
<dbReference type="InterPro" id="IPR032710">
    <property type="entry name" value="NTF2-like_dom_sf"/>
</dbReference>
<dbReference type="InterPro" id="IPR000719">
    <property type="entry name" value="Prot_kinase_dom"/>
</dbReference>
<dbReference type="InterPro" id="IPR017441">
    <property type="entry name" value="Protein_kinase_ATP_BS"/>
</dbReference>
<dbReference type="InterPro" id="IPR008271">
    <property type="entry name" value="Ser/Thr_kinase_AS"/>
</dbReference>
<dbReference type="PANTHER" id="PTHR24363">
    <property type="entry name" value="SERINE/THREONINE PROTEIN KINASE"/>
    <property type="match status" value="1"/>
</dbReference>
<dbReference type="PANTHER" id="PTHR24363:SF0">
    <property type="entry name" value="SERINE_THREONINE KINASE LIKE DOMAIN CONTAINING 1"/>
    <property type="match status" value="1"/>
</dbReference>
<dbReference type="Pfam" id="PF00069">
    <property type="entry name" value="Pkinase"/>
    <property type="match status" value="1"/>
</dbReference>
<dbReference type="SMART" id="SM00220">
    <property type="entry name" value="S_TKc"/>
    <property type="match status" value="1"/>
</dbReference>
<dbReference type="SUPFAM" id="SSF54427">
    <property type="entry name" value="NTF2-like"/>
    <property type="match status" value="1"/>
</dbReference>
<dbReference type="SUPFAM" id="SSF56112">
    <property type="entry name" value="Protein kinase-like (PK-like)"/>
    <property type="match status" value="1"/>
</dbReference>
<dbReference type="PROSITE" id="PS00107">
    <property type="entry name" value="PROTEIN_KINASE_ATP"/>
    <property type="match status" value="1"/>
</dbReference>
<dbReference type="PROSITE" id="PS50011">
    <property type="entry name" value="PROTEIN_KINASE_DOM"/>
    <property type="match status" value="1"/>
</dbReference>
<dbReference type="PROSITE" id="PS00108">
    <property type="entry name" value="PROTEIN_KINASE_ST"/>
    <property type="match status" value="1"/>
</dbReference>
<protein>
    <recommendedName>
        <fullName>Serine/threonine-protein kinase PknA</fullName>
        <ecNumber>2.7.11.1</ecNumber>
    </recommendedName>
</protein>
<reference key="1">
    <citation type="journal article" date="1993" name="Proc. Natl. Acad. Sci. U.S.A.">
        <title>A gene encoding a protein related to eukaryotic protein kinases from the filamentous heterocystous cyanobacterium Anabaena PCC 7120.</title>
        <authorList>
            <person name="Zhang C.C."/>
        </authorList>
    </citation>
    <scope>NUCLEOTIDE SEQUENCE [GENOMIC DNA]</scope>
</reference>
<reference key="2">
    <citation type="journal article" date="2001" name="DNA Res.">
        <title>Complete genomic sequence of the filamentous nitrogen-fixing cyanobacterium Anabaena sp. strain PCC 7120.</title>
        <authorList>
            <person name="Kaneko T."/>
            <person name="Nakamura Y."/>
            <person name="Wolk C.P."/>
            <person name="Kuritz T."/>
            <person name="Sasamoto S."/>
            <person name="Watanabe A."/>
            <person name="Iriguchi M."/>
            <person name="Ishikawa A."/>
            <person name="Kawashima K."/>
            <person name="Kimura T."/>
            <person name="Kishida Y."/>
            <person name="Kohara M."/>
            <person name="Matsumoto M."/>
            <person name="Matsuno A."/>
            <person name="Muraki A."/>
            <person name="Nakazaki N."/>
            <person name="Shimpo S."/>
            <person name="Sugimoto M."/>
            <person name="Takazawa M."/>
            <person name="Yamada M."/>
            <person name="Yasuda M."/>
            <person name="Tabata S."/>
        </authorList>
    </citation>
    <scope>NUCLEOTIDE SEQUENCE [LARGE SCALE GENOMIC DNA]</scope>
    <source>
        <strain>PCC 7120 / SAG 25.82 / UTEX 2576</strain>
    </source>
</reference>
<sequence>MEQLLDNRYRVIKTLGSGGFGETFLAEDSQMPSNRRCVVKQLRPIHNNPQIYQLVQERFQREAAILEDLGSYSGQIPTLYAYFQSNTQFYVVQEWVEGDTLTAKLKQQGVLSESAVRDILINLLPVLEYVHSKRIIHRDIKPDNIILRHRDGKPVLIDFGAVRESMGTVINSQGNPTSSIVIGTPGYMPSEQAAGRPVYSSDLYSLGLTAIYLLTGKQPQELETEPHSGEIIWHRYALNISPTLAAVIDRAIAYHPRERFTTAREMLEALQLGVVSYPPTVPYQQPQSSPTVPYQQPPVVTTPPFATQTNTVAVSPGTAPTPQPINHNNSNKGILMGSLIAGGLIGASVVIGFALTRPNQPVTQTTSLPSETTISNNDTPTVEPSPTDTPETPISQTVTQDPTPQASVRFPINSRPFTTPIDSKPRNTTEPTTSVPQPTTPSEPQITTPVEATDRPSPEQAVQNYYETINQGEYSTAWNLLASSFQNNRKLHPRGYDSYLDWWGGQVENVDVEQVSLLKANADTATVNARLRYFMKSGRQSSSSVRFSLVWDADNNRWVVSGAR</sequence>
<name>PKNA_NOSS1</name>
<keyword id="KW-0067">ATP-binding</keyword>
<keyword id="KW-0418">Kinase</keyword>
<keyword id="KW-0547">Nucleotide-binding</keyword>
<keyword id="KW-1185">Reference proteome</keyword>
<keyword id="KW-0723">Serine/threonine-protein kinase</keyword>
<keyword id="KW-0808">Transferase</keyword>
<accession>P54734</accession>
<gene>
    <name type="primary">pknA</name>
    <name type="ordered locus">alr4366</name>
</gene>
<evidence type="ECO:0000255" key="1">
    <source>
        <dbReference type="PROSITE-ProRule" id="PRU00159"/>
    </source>
</evidence>
<evidence type="ECO:0000255" key="2">
    <source>
        <dbReference type="PROSITE-ProRule" id="PRU10027"/>
    </source>
</evidence>
<evidence type="ECO:0000256" key="3">
    <source>
        <dbReference type="SAM" id="MobiDB-lite"/>
    </source>
</evidence>
<evidence type="ECO:0000305" key="4"/>